<protein>
    <recommendedName>
        <fullName>Inverted formin-2</fullName>
    </recommendedName>
</protein>
<keyword id="KW-0009">Actin-binding</keyword>
<keyword id="KW-0175">Coiled coil</keyword>
<keyword id="KW-1185">Reference proteome</keyword>
<proteinExistence type="evidence at transcript level"/>
<dbReference type="EMBL" id="BC068848">
    <property type="protein sequence ID" value="AAH68848.1"/>
    <property type="molecule type" value="mRNA"/>
</dbReference>
<dbReference type="RefSeq" id="NP_001084562.1">
    <property type="nucleotide sequence ID" value="NM_001091093.1"/>
</dbReference>
<dbReference type="SMR" id="Q6NTV6"/>
<dbReference type="IntAct" id="Q6NTV6">
    <property type="interactions" value="1"/>
</dbReference>
<dbReference type="MINT" id="Q6NTV6"/>
<dbReference type="DNASU" id="414513"/>
<dbReference type="GeneID" id="414513"/>
<dbReference type="KEGG" id="xla:414513"/>
<dbReference type="AGR" id="Xenbase:XB-GENE-5862221"/>
<dbReference type="CTD" id="414513"/>
<dbReference type="Xenbase" id="XB-GENE-5862221">
    <property type="gene designation" value="inf2.S"/>
</dbReference>
<dbReference type="OrthoDB" id="26518at2759"/>
<dbReference type="Proteomes" id="UP000186698">
    <property type="component" value="Chromosome 8S"/>
</dbReference>
<dbReference type="Bgee" id="414513">
    <property type="expression patterns" value="Expressed in stomach and 17 other cell types or tissues"/>
</dbReference>
<dbReference type="GO" id="GO:0003779">
    <property type="term" value="F:actin binding"/>
    <property type="evidence" value="ECO:0007669"/>
    <property type="project" value="UniProtKB-KW"/>
</dbReference>
<dbReference type="GO" id="GO:0031267">
    <property type="term" value="F:small GTPase binding"/>
    <property type="evidence" value="ECO:0007669"/>
    <property type="project" value="InterPro"/>
</dbReference>
<dbReference type="GO" id="GO:0030036">
    <property type="term" value="P:actin cytoskeleton organization"/>
    <property type="evidence" value="ECO:0007669"/>
    <property type="project" value="InterPro"/>
</dbReference>
<dbReference type="Gene3D" id="1.20.58.2220">
    <property type="entry name" value="Formin, FH2 domain"/>
    <property type="match status" value="1"/>
</dbReference>
<dbReference type="Gene3D" id="1.10.238.150">
    <property type="entry name" value="Formin, FH3 diaphanous domain"/>
    <property type="match status" value="1"/>
</dbReference>
<dbReference type="Gene3D" id="1.25.10.10">
    <property type="entry name" value="Leucine-rich Repeat Variant"/>
    <property type="match status" value="1"/>
</dbReference>
<dbReference type="InterPro" id="IPR011989">
    <property type="entry name" value="ARM-like"/>
</dbReference>
<dbReference type="InterPro" id="IPR016024">
    <property type="entry name" value="ARM-type_fold"/>
</dbReference>
<dbReference type="InterPro" id="IPR015425">
    <property type="entry name" value="FH2_Formin"/>
</dbReference>
<dbReference type="InterPro" id="IPR042201">
    <property type="entry name" value="FH2_Formin_sf"/>
</dbReference>
<dbReference type="InterPro" id="IPR010472">
    <property type="entry name" value="FH3_dom"/>
</dbReference>
<dbReference type="InterPro" id="IPR014768">
    <property type="entry name" value="GBD/FH3_dom"/>
</dbReference>
<dbReference type="InterPro" id="IPR010473">
    <property type="entry name" value="GTPase-bd"/>
</dbReference>
<dbReference type="InterPro" id="IPR003124">
    <property type="entry name" value="WH2_dom"/>
</dbReference>
<dbReference type="PANTHER" id="PTHR46345">
    <property type="entry name" value="INVERTED FORMIN-2"/>
    <property type="match status" value="1"/>
</dbReference>
<dbReference type="PANTHER" id="PTHR46345:SF5">
    <property type="entry name" value="INVERTED FORMIN-2"/>
    <property type="match status" value="1"/>
</dbReference>
<dbReference type="Pfam" id="PF06367">
    <property type="entry name" value="Drf_FH3"/>
    <property type="match status" value="1"/>
</dbReference>
<dbReference type="Pfam" id="PF06371">
    <property type="entry name" value="Drf_GBD"/>
    <property type="match status" value="1"/>
</dbReference>
<dbReference type="Pfam" id="PF02181">
    <property type="entry name" value="FH2"/>
    <property type="match status" value="1"/>
</dbReference>
<dbReference type="PRINTS" id="PR01217">
    <property type="entry name" value="PRICHEXTENSN"/>
</dbReference>
<dbReference type="SMART" id="SM01139">
    <property type="entry name" value="Drf_FH3"/>
    <property type="match status" value="1"/>
</dbReference>
<dbReference type="SMART" id="SM01140">
    <property type="entry name" value="Drf_GBD"/>
    <property type="match status" value="1"/>
</dbReference>
<dbReference type="SMART" id="SM00498">
    <property type="entry name" value="FH2"/>
    <property type="match status" value="1"/>
</dbReference>
<dbReference type="SUPFAM" id="SSF48371">
    <property type="entry name" value="ARM repeat"/>
    <property type="match status" value="1"/>
</dbReference>
<dbReference type="SUPFAM" id="SSF101447">
    <property type="entry name" value="Formin homology 2 domain (FH2 domain)"/>
    <property type="match status" value="1"/>
</dbReference>
<dbReference type="PROSITE" id="PS51444">
    <property type="entry name" value="FH2"/>
    <property type="match status" value="1"/>
</dbReference>
<dbReference type="PROSITE" id="PS51232">
    <property type="entry name" value="GBD_FH3"/>
    <property type="match status" value="1"/>
</dbReference>
<dbReference type="PROSITE" id="PS51082">
    <property type="entry name" value="WH2"/>
    <property type="match status" value="1"/>
</dbReference>
<sequence length="1099" mass="121481">MSLTEGAHTKWGVLKQKLGPQDPDQIEGNLENADPELCIRLLQIPSVVNYSGLKKRLESSDDEWMCQFLELSGLDLLLEALDRLSGRGVARIADALLQLTCINCVRTLMNSHKGIEYIVNNEGYVRKLSQALDTSNVMVKKQVFELLAALCIYSPEGHALCLDALEHYKVVKNQQYRFSVITNELSSSDNVPYMVTLLSVINAIIFGTEELRNRVQLRNEFIGLQLLDLLTKLRDLEDEDLLIQALVFEEAKSEDEEELLKIYGGINMNNHQEVFSTLFNKVSCSPLSVQLLSILQGLLQLDQSHPTSPLLWEALEVLVNRAVLLADDCQNNNVEEVMDRLVTSKKLSSKEKRKTDKCTNKVNKSIQTDKPKEESCEGKTVKKDPVSSGIPADSLQLLDALLAPPTKEDSPACITPLHTHLSGELTCSSVLPSPPSPLVPNADERISSSSSPLPPPPPPLPGTELSPPPPGMVALSLPPPPPPLPGMGGMLPPPPPPLPGMGGMLPTPPPPPLPGMGGMLPPPPPPLPGMGGMLPPPPPPLPGMGGMLPPPPPPLPGMGGMLPPPPPLPGMGGMLPPPPPPLPGMGGMPPPPPPMPGMGTFTDEVVVARVDYSLGYLPKAFLKVNKPTLKMKKLNWQKIPPNVIKDSHSMWASASSIEDTVEPNYSSIEQLFCLPQAAVKESAVPVKKPPKEITFLDSKKNLNLNIFLKQFKCPNKEVIELIEKGDRSRFDIEILKQFLKLLPEKHEVENLKSYQEDKAKLSNADQFYLLLLGVPCYQLRIECMLICEEINLMIDMIRPRAKVVSSACDDIISSHRLPLFCQLILKVGNFLNYGSHTGNANGFKISTLLKLTETRANQTRITLLHHILEEIEHNHTDLLQLPTDLENVSTVAGINIENMYTETSGNLKKLRDLQNKISTAATDVKEQYEKSIQDCMDTLKELEEQLTDISQKKVKLADYLCEDPTKLSLEETFSTMKAFRELFLKAKKDNKDRKEQAVKAEKRKQQIADEETKRQKGENGKIIRKGAAKLEEGCIIDDLLADIKKGFQLRKTAKTKTKADACPKTLSSETNRTDIQHVGKRPEVPPVHPQRKIIILKRQ</sequence>
<feature type="chain" id="PRO_0000259891" description="Inverted formin-2">
    <location>
        <begin position="1"/>
        <end position="1099"/>
    </location>
</feature>
<feature type="domain" description="GBD/FH3" evidence="3">
    <location>
        <begin position="1"/>
        <end position="330"/>
    </location>
</feature>
<feature type="domain" description="FH1">
    <location>
        <begin position="426"/>
        <end position="569"/>
    </location>
</feature>
<feature type="domain" description="FH2" evidence="4">
    <location>
        <begin position="621"/>
        <end position="1009"/>
    </location>
</feature>
<feature type="domain" description="WH2" evidence="2">
    <location>
        <begin position="1037"/>
        <end position="1052"/>
    </location>
</feature>
<feature type="region of interest" description="Disordered" evidence="5">
    <location>
        <begin position="348"/>
        <end position="391"/>
    </location>
</feature>
<feature type="region of interest" description="Disordered" evidence="5">
    <location>
        <begin position="432"/>
        <end position="509"/>
    </location>
</feature>
<feature type="region of interest" description="Disordered" evidence="5">
    <location>
        <begin position="1000"/>
        <end position="1019"/>
    </location>
</feature>
<feature type="region of interest" description="Disordered" evidence="5">
    <location>
        <begin position="1064"/>
        <end position="1085"/>
    </location>
</feature>
<feature type="coiled-coil region" evidence="1">
    <location>
        <begin position="907"/>
        <end position="1019"/>
    </location>
</feature>
<feature type="compositionally biased region" description="Basic and acidic residues" evidence="5">
    <location>
        <begin position="348"/>
        <end position="359"/>
    </location>
</feature>
<feature type="compositionally biased region" description="Basic and acidic residues" evidence="5">
    <location>
        <begin position="367"/>
        <end position="385"/>
    </location>
</feature>
<feature type="compositionally biased region" description="Pro residues" evidence="5">
    <location>
        <begin position="452"/>
        <end position="499"/>
    </location>
</feature>
<feature type="compositionally biased region" description="Basic and acidic residues" evidence="5">
    <location>
        <begin position="1071"/>
        <end position="1083"/>
    </location>
</feature>
<name>INF2_XENLA</name>
<reference key="1">
    <citation type="submission" date="2004-04" db="EMBL/GenBank/DDBJ databases">
        <authorList>
            <consortium name="NIH - Xenopus Gene Collection (XGC) project"/>
        </authorList>
    </citation>
    <scope>NUCLEOTIDE SEQUENCE [LARGE SCALE MRNA]</scope>
    <source>
        <tissue>Embryo</tissue>
    </source>
</reference>
<gene>
    <name type="primary">inf2</name>
</gene>
<comment type="similarity">
    <text evidence="6">Belongs to the formin homology family.</text>
</comment>
<accession>Q6NTV6</accession>
<organism>
    <name type="scientific">Xenopus laevis</name>
    <name type="common">African clawed frog</name>
    <dbReference type="NCBI Taxonomy" id="8355"/>
    <lineage>
        <taxon>Eukaryota</taxon>
        <taxon>Metazoa</taxon>
        <taxon>Chordata</taxon>
        <taxon>Craniata</taxon>
        <taxon>Vertebrata</taxon>
        <taxon>Euteleostomi</taxon>
        <taxon>Amphibia</taxon>
        <taxon>Batrachia</taxon>
        <taxon>Anura</taxon>
        <taxon>Pipoidea</taxon>
        <taxon>Pipidae</taxon>
        <taxon>Xenopodinae</taxon>
        <taxon>Xenopus</taxon>
        <taxon>Xenopus</taxon>
    </lineage>
</organism>
<evidence type="ECO:0000255" key="1"/>
<evidence type="ECO:0000255" key="2">
    <source>
        <dbReference type="PROSITE-ProRule" id="PRU00406"/>
    </source>
</evidence>
<evidence type="ECO:0000255" key="3">
    <source>
        <dbReference type="PROSITE-ProRule" id="PRU00579"/>
    </source>
</evidence>
<evidence type="ECO:0000255" key="4">
    <source>
        <dbReference type="PROSITE-ProRule" id="PRU00774"/>
    </source>
</evidence>
<evidence type="ECO:0000256" key="5">
    <source>
        <dbReference type="SAM" id="MobiDB-lite"/>
    </source>
</evidence>
<evidence type="ECO:0000305" key="6"/>